<sequence>MTLQEQIMKALHVQPVIDPKAEIRKRVDFLKDYVKKTGAKGFVLGISGGQDSTLAGRLAQLAVEEIRNEGGNATFIAVRLPYKVQKDEDDAQLALQFIQADQSVAFDIASTVDAFSNQYENLLDESLTDFNKGNVKARIRMVTQYAIGGQKGLLVIGTDHAAEAVTGFFTKFGDGGADLLPLTGLTKRQGRALLQELGADERLYLKMPTADLLDEKPGQADETELGITYDQLDDYLEGKTVPADVAEKIEKRYTVSEHKRQVPASMFDDWWK</sequence>
<comment type="function">
    <text evidence="1">Catalyzes the ATP-dependent amidation of deamido-NAD to form NAD. Uses ammonia as a nitrogen source.</text>
</comment>
<comment type="catalytic activity">
    <reaction evidence="1">
        <text>deamido-NAD(+) + NH4(+) + ATP = AMP + diphosphate + NAD(+) + H(+)</text>
        <dbReference type="Rhea" id="RHEA:21188"/>
        <dbReference type="ChEBI" id="CHEBI:15378"/>
        <dbReference type="ChEBI" id="CHEBI:28938"/>
        <dbReference type="ChEBI" id="CHEBI:30616"/>
        <dbReference type="ChEBI" id="CHEBI:33019"/>
        <dbReference type="ChEBI" id="CHEBI:57540"/>
        <dbReference type="ChEBI" id="CHEBI:58437"/>
        <dbReference type="ChEBI" id="CHEBI:456215"/>
        <dbReference type="EC" id="6.3.1.5"/>
    </reaction>
</comment>
<comment type="pathway">
    <text evidence="1">Cofactor biosynthesis; NAD(+) biosynthesis; NAD(+) from deamido-NAD(+) (ammonia route): step 1/1.</text>
</comment>
<comment type="subunit">
    <text evidence="1">Homodimer.</text>
</comment>
<comment type="similarity">
    <text evidence="1">Belongs to the NAD synthetase family.</text>
</comment>
<gene>
    <name evidence="1" type="primary">nadE</name>
    <name type="ordered locus">BAA_2067</name>
</gene>
<proteinExistence type="inferred from homology"/>
<evidence type="ECO:0000255" key="1">
    <source>
        <dbReference type="HAMAP-Rule" id="MF_00193"/>
    </source>
</evidence>
<keyword id="KW-0067">ATP-binding</keyword>
<keyword id="KW-0436">Ligase</keyword>
<keyword id="KW-0460">Magnesium</keyword>
<keyword id="KW-0479">Metal-binding</keyword>
<keyword id="KW-0520">NAD</keyword>
<keyword id="KW-0547">Nucleotide-binding</keyword>
<name>NADE_BACAA</name>
<organism>
    <name type="scientific">Bacillus anthracis (strain A0248)</name>
    <dbReference type="NCBI Taxonomy" id="592021"/>
    <lineage>
        <taxon>Bacteria</taxon>
        <taxon>Bacillati</taxon>
        <taxon>Bacillota</taxon>
        <taxon>Bacilli</taxon>
        <taxon>Bacillales</taxon>
        <taxon>Bacillaceae</taxon>
        <taxon>Bacillus</taxon>
        <taxon>Bacillus cereus group</taxon>
    </lineage>
</organism>
<feature type="chain" id="PRO_1000191494" description="NH(3)-dependent NAD(+) synthetase">
    <location>
        <begin position="1"/>
        <end position="272"/>
    </location>
</feature>
<feature type="binding site" evidence="1">
    <location>
        <begin position="45"/>
        <end position="52"/>
    </location>
    <ligand>
        <name>ATP</name>
        <dbReference type="ChEBI" id="CHEBI:30616"/>
    </ligand>
</feature>
<feature type="binding site" evidence="1">
    <location>
        <position position="51"/>
    </location>
    <ligand>
        <name>Mg(2+)</name>
        <dbReference type="ChEBI" id="CHEBI:18420"/>
    </ligand>
</feature>
<feature type="binding site" evidence="1">
    <location>
        <position position="138"/>
    </location>
    <ligand>
        <name>deamido-NAD(+)</name>
        <dbReference type="ChEBI" id="CHEBI:58437"/>
    </ligand>
</feature>
<feature type="binding site" evidence="1">
    <location>
        <position position="158"/>
    </location>
    <ligand>
        <name>ATP</name>
        <dbReference type="ChEBI" id="CHEBI:30616"/>
    </ligand>
</feature>
<feature type="binding site" evidence="1">
    <location>
        <position position="163"/>
    </location>
    <ligand>
        <name>Mg(2+)</name>
        <dbReference type="ChEBI" id="CHEBI:18420"/>
    </ligand>
</feature>
<feature type="binding site" evidence="1">
    <location>
        <position position="171"/>
    </location>
    <ligand>
        <name>deamido-NAD(+)</name>
        <dbReference type="ChEBI" id="CHEBI:58437"/>
    </ligand>
</feature>
<feature type="binding site" evidence="1">
    <location>
        <position position="178"/>
    </location>
    <ligand>
        <name>deamido-NAD(+)</name>
        <dbReference type="ChEBI" id="CHEBI:58437"/>
    </ligand>
</feature>
<feature type="binding site" evidence="1">
    <location>
        <position position="187"/>
    </location>
    <ligand>
        <name>ATP</name>
        <dbReference type="ChEBI" id="CHEBI:30616"/>
    </ligand>
</feature>
<feature type="binding site" evidence="1">
    <location>
        <position position="209"/>
    </location>
    <ligand>
        <name>ATP</name>
        <dbReference type="ChEBI" id="CHEBI:30616"/>
    </ligand>
</feature>
<feature type="binding site" evidence="1">
    <location>
        <begin position="258"/>
        <end position="259"/>
    </location>
    <ligand>
        <name>deamido-NAD(+)</name>
        <dbReference type="ChEBI" id="CHEBI:58437"/>
    </ligand>
</feature>
<reference key="1">
    <citation type="submission" date="2009-04" db="EMBL/GenBank/DDBJ databases">
        <title>Genome sequence of Bacillus anthracis A0248.</title>
        <authorList>
            <person name="Dodson R.J."/>
            <person name="Munk A.C."/>
            <person name="Bruce D."/>
            <person name="Detter C."/>
            <person name="Tapia R."/>
            <person name="Sutton G."/>
            <person name="Sims D."/>
            <person name="Brettin T."/>
        </authorList>
    </citation>
    <scope>NUCLEOTIDE SEQUENCE [LARGE SCALE GENOMIC DNA]</scope>
    <source>
        <strain>A0248</strain>
    </source>
</reference>
<accession>C3P7H9</accession>
<protein>
    <recommendedName>
        <fullName evidence="1">NH(3)-dependent NAD(+) synthetase</fullName>
        <ecNumber evidence="1">6.3.1.5</ecNumber>
    </recommendedName>
</protein>
<dbReference type="EC" id="6.3.1.5" evidence="1"/>
<dbReference type="EMBL" id="CP001598">
    <property type="protein sequence ID" value="ACQ49501.1"/>
    <property type="molecule type" value="Genomic_DNA"/>
</dbReference>
<dbReference type="RefSeq" id="WP_000174879.1">
    <property type="nucleotide sequence ID" value="NC_012659.1"/>
</dbReference>
<dbReference type="SMR" id="C3P7H9"/>
<dbReference type="GeneID" id="75085226"/>
<dbReference type="KEGG" id="bai:BAA_2067"/>
<dbReference type="HOGENOM" id="CLU_059327_3_0_9"/>
<dbReference type="UniPathway" id="UPA00253">
    <property type="reaction ID" value="UER00333"/>
</dbReference>
<dbReference type="GO" id="GO:0005737">
    <property type="term" value="C:cytoplasm"/>
    <property type="evidence" value="ECO:0007669"/>
    <property type="project" value="InterPro"/>
</dbReference>
<dbReference type="GO" id="GO:0005524">
    <property type="term" value="F:ATP binding"/>
    <property type="evidence" value="ECO:0007669"/>
    <property type="project" value="UniProtKB-UniRule"/>
</dbReference>
<dbReference type="GO" id="GO:0004359">
    <property type="term" value="F:glutaminase activity"/>
    <property type="evidence" value="ECO:0007669"/>
    <property type="project" value="InterPro"/>
</dbReference>
<dbReference type="GO" id="GO:0046872">
    <property type="term" value="F:metal ion binding"/>
    <property type="evidence" value="ECO:0007669"/>
    <property type="project" value="UniProtKB-KW"/>
</dbReference>
<dbReference type="GO" id="GO:0003952">
    <property type="term" value="F:NAD+ synthase (glutamine-hydrolyzing) activity"/>
    <property type="evidence" value="ECO:0007669"/>
    <property type="project" value="InterPro"/>
</dbReference>
<dbReference type="GO" id="GO:0008795">
    <property type="term" value="F:NAD+ synthase activity"/>
    <property type="evidence" value="ECO:0007669"/>
    <property type="project" value="UniProtKB-UniRule"/>
</dbReference>
<dbReference type="GO" id="GO:0009435">
    <property type="term" value="P:NAD biosynthetic process"/>
    <property type="evidence" value="ECO:0007669"/>
    <property type="project" value="UniProtKB-UniRule"/>
</dbReference>
<dbReference type="CDD" id="cd00553">
    <property type="entry name" value="NAD_synthase"/>
    <property type="match status" value="1"/>
</dbReference>
<dbReference type="FunFam" id="3.40.50.620:FF:000015">
    <property type="entry name" value="NH(3)-dependent NAD(+) synthetase"/>
    <property type="match status" value="1"/>
</dbReference>
<dbReference type="Gene3D" id="3.40.50.620">
    <property type="entry name" value="HUPs"/>
    <property type="match status" value="1"/>
</dbReference>
<dbReference type="HAMAP" id="MF_00193">
    <property type="entry name" value="NadE_ammonia_dep"/>
    <property type="match status" value="1"/>
</dbReference>
<dbReference type="InterPro" id="IPR022310">
    <property type="entry name" value="NAD/GMP_synthase"/>
</dbReference>
<dbReference type="InterPro" id="IPR003694">
    <property type="entry name" value="NAD_synthase"/>
</dbReference>
<dbReference type="InterPro" id="IPR022926">
    <property type="entry name" value="NH(3)-dep_NAD(+)_synth"/>
</dbReference>
<dbReference type="InterPro" id="IPR014729">
    <property type="entry name" value="Rossmann-like_a/b/a_fold"/>
</dbReference>
<dbReference type="NCBIfam" id="TIGR00552">
    <property type="entry name" value="nadE"/>
    <property type="match status" value="1"/>
</dbReference>
<dbReference type="NCBIfam" id="NF001979">
    <property type="entry name" value="PRK00768.1"/>
    <property type="match status" value="1"/>
</dbReference>
<dbReference type="PANTHER" id="PTHR23090">
    <property type="entry name" value="NH 3 /GLUTAMINE-DEPENDENT NAD + SYNTHETASE"/>
    <property type="match status" value="1"/>
</dbReference>
<dbReference type="PANTHER" id="PTHR23090:SF7">
    <property type="entry name" value="NH(3)-DEPENDENT NAD(+) SYNTHETASE"/>
    <property type="match status" value="1"/>
</dbReference>
<dbReference type="Pfam" id="PF02540">
    <property type="entry name" value="NAD_synthase"/>
    <property type="match status" value="1"/>
</dbReference>
<dbReference type="SUPFAM" id="SSF52402">
    <property type="entry name" value="Adenine nucleotide alpha hydrolases-like"/>
    <property type="match status" value="1"/>
</dbReference>